<dbReference type="EC" id="4.1.99.12" evidence="1"/>
<dbReference type="EC" id="3.5.4.25" evidence="1"/>
<dbReference type="EMBL" id="CP000029">
    <property type="protein sequence ID" value="AAW54662.1"/>
    <property type="molecule type" value="Genomic_DNA"/>
</dbReference>
<dbReference type="SMR" id="Q5HNE3"/>
<dbReference type="STRING" id="176279.SERP1326"/>
<dbReference type="KEGG" id="ser:SERP1326"/>
<dbReference type="eggNOG" id="COG0108">
    <property type="taxonomic scope" value="Bacteria"/>
</dbReference>
<dbReference type="eggNOG" id="COG0807">
    <property type="taxonomic scope" value="Bacteria"/>
</dbReference>
<dbReference type="HOGENOM" id="CLU_020273_1_2_9"/>
<dbReference type="UniPathway" id="UPA00275">
    <property type="reaction ID" value="UER00399"/>
</dbReference>
<dbReference type="UniPathway" id="UPA00275">
    <property type="reaction ID" value="UER00400"/>
</dbReference>
<dbReference type="Proteomes" id="UP000000531">
    <property type="component" value="Chromosome"/>
</dbReference>
<dbReference type="GO" id="GO:0005829">
    <property type="term" value="C:cytosol"/>
    <property type="evidence" value="ECO:0007669"/>
    <property type="project" value="TreeGrafter"/>
</dbReference>
<dbReference type="GO" id="GO:0008686">
    <property type="term" value="F:3,4-dihydroxy-2-butanone-4-phosphate synthase activity"/>
    <property type="evidence" value="ECO:0007669"/>
    <property type="project" value="UniProtKB-UniRule"/>
</dbReference>
<dbReference type="GO" id="GO:0005525">
    <property type="term" value="F:GTP binding"/>
    <property type="evidence" value="ECO:0007669"/>
    <property type="project" value="UniProtKB-KW"/>
</dbReference>
<dbReference type="GO" id="GO:0003935">
    <property type="term" value="F:GTP cyclohydrolase II activity"/>
    <property type="evidence" value="ECO:0007669"/>
    <property type="project" value="UniProtKB-UniRule"/>
</dbReference>
<dbReference type="GO" id="GO:0000287">
    <property type="term" value="F:magnesium ion binding"/>
    <property type="evidence" value="ECO:0007669"/>
    <property type="project" value="UniProtKB-UniRule"/>
</dbReference>
<dbReference type="GO" id="GO:0030145">
    <property type="term" value="F:manganese ion binding"/>
    <property type="evidence" value="ECO:0007669"/>
    <property type="project" value="UniProtKB-UniRule"/>
</dbReference>
<dbReference type="GO" id="GO:0008270">
    <property type="term" value="F:zinc ion binding"/>
    <property type="evidence" value="ECO:0007669"/>
    <property type="project" value="UniProtKB-UniRule"/>
</dbReference>
<dbReference type="GO" id="GO:0009231">
    <property type="term" value="P:riboflavin biosynthetic process"/>
    <property type="evidence" value="ECO:0007669"/>
    <property type="project" value="UniProtKB-UniRule"/>
</dbReference>
<dbReference type="CDD" id="cd00641">
    <property type="entry name" value="GTP_cyclohydro2"/>
    <property type="match status" value="1"/>
</dbReference>
<dbReference type="FunFam" id="3.40.50.10990:FF:000002">
    <property type="entry name" value="GTP cyclohydrolase-2"/>
    <property type="match status" value="1"/>
</dbReference>
<dbReference type="FunFam" id="3.90.870.10:FF:000001">
    <property type="entry name" value="Riboflavin biosynthesis protein RibBA"/>
    <property type="match status" value="1"/>
</dbReference>
<dbReference type="Gene3D" id="3.90.870.10">
    <property type="entry name" value="DHBP synthase"/>
    <property type="match status" value="1"/>
</dbReference>
<dbReference type="Gene3D" id="3.40.50.10990">
    <property type="entry name" value="GTP cyclohydrolase II"/>
    <property type="match status" value="1"/>
</dbReference>
<dbReference type="HAMAP" id="MF_00179">
    <property type="entry name" value="RibA"/>
    <property type="match status" value="1"/>
</dbReference>
<dbReference type="HAMAP" id="MF_00180">
    <property type="entry name" value="RibB"/>
    <property type="match status" value="1"/>
</dbReference>
<dbReference type="HAMAP" id="MF_01283">
    <property type="entry name" value="RibBA"/>
    <property type="match status" value="1"/>
</dbReference>
<dbReference type="InterPro" id="IPR017945">
    <property type="entry name" value="DHBP_synth_RibB-like_a/b_dom"/>
</dbReference>
<dbReference type="InterPro" id="IPR000422">
    <property type="entry name" value="DHBP_synthase_RibB"/>
</dbReference>
<dbReference type="InterPro" id="IPR032677">
    <property type="entry name" value="GTP_cyclohydro_II"/>
</dbReference>
<dbReference type="InterPro" id="IPR000926">
    <property type="entry name" value="RibA"/>
</dbReference>
<dbReference type="InterPro" id="IPR036144">
    <property type="entry name" value="RibA-like_sf"/>
</dbReference>
<dbReference type="InterPro" id="IPR016299">
    <property type="entry name" value="Riboflavin_synth_RibBA"/>
</dbReference>
<dbReference type="NCBIfam" id="NF001591">
    <property type="entry name" value="PRK00393.1"/>
    <property type="match status" value="1"/>
</dbReference>
<dbReference type="NCBIfam" id="TIGR00505">
    <property type="entry name" value="ribA"/>
    <property type="match status" value="1"/>
</dbReference>
<dbReference type="NCBIfam" id="TIGR00506">
    <property type="entry name" value="ribB"/>
    <property type="match status" value="1"/>
</dbReference>
<dbReference type="PANTHER" id="PTHR21327:SF18">
    <property type="entry name" value="3,4-DIHYDROXY-2-BUTANONE 4-PHOSPHATE SYNTHASE"/>
    <property type="match status" value="1"/>
</dbReference>
<dbReference type="PANTHER" id="PTHR21327">
    <property type="entry name" value="GTP CYCLOHYDROLASE II-RELATED"/>
    <property type="match status" value="1"/>
</dbReference>
<dbReference type="Pfam" id="PF00926">
    <property type="entry name" value="DHBP_synthase"/>
    <property type="match status" value="1"/>
</dbReference>
<dbReference type="Pfam" id="PF00925">
    <property type="entry name" value="GTP_cyclohydro2"/>
    <property type="match status" value="1"/>
</dbReference>
<dbReference type="PIRSF" id="PIRSF001259">
    <property type="entry name" value="RibA"/>
    <property type="match status" value="1"/>
</dbReference>
<dbReference type="SUPFAM" id="SSF142695">
    <property type="entry name" value="RibA-like"/>
    <property type="match status" value="1"/>
</dbReference>
<dbReference type="SUPFAM" id="SSF55821">
    <property type="entry name" value="YrdC/RibB"/>
    <property type="match status" value="1"/>
</dbReference>
<comment type="function">
    <text evidence="1">Catalyzes the conversion of D-ribulose 5-phosphate to formate and 3,4-dihydroxy-2-butanone 4-phosphate.</text>
</comment>
<comment type="function">
    <text evidence="1">Catalyzes the conversion of GTP to 2,5-diamino-6-ribosylamino-4(3H)-pyrimidinone 5'-phosphate (DARP), formate and pyrophosphate.</text>
</comment>
<comment type="catalytic activity">
    <reaction evidence="1">
        <text>D-ribulose 5-phosphate = (2S)-2-hydroxy-3-oxobutyl phosphate + formate + H(+)</text>
        <dbReference type="Rhea" id="RHEA:18457"/>
        <dbReference type="ChEBI" id="CHEBI:15378"/>
        <dbReference type="ChEBI" id="CHEBI:15740"/>
        <dbReference type="ChEBI" id="CHEBI:58121"/>
        <dbReference type="ChEBI" id="CHEBI:58830"/>
        <dbReference type="EC" id="4.1.99.12"/>
    </reaction>
</comment>
<comment type="catalytic activity">
    <reaction evidence="1">
        <text>GTP + 4 H2O = 2,5-diamino-6-hydroxy-4-(5-phosphoribosylamino)-pyrimidine + formate + 2 phosphate + 3 H(+)</text>
        <dbReference type="Rhea" id="RHEA:23704"/>
        <dbReference type="ChEBI" id="CHEBI:15377"/>
        <dbReference type="ChEBI" id="CHEBI:15378"/>
        <dbReference type="ChEBI" id="CHEBI:15740"/>
        <dbReference type="ChEBI" id="CHEBI:37565"/>
        <dbReference type="ChEBI" id="CHEBI:43474"/>
        <dbReference type="ChEBI" id="CHEBI:58614"/>
        <dbReference type="EC" id="3.5.4.25"/>
    </reaction>
</comment>
<comment type="cofactor">
    <cofactor evidence="1">
        <name>Mg(2+)</name>
        <dbReference type="ChEBI" id="CHEBI:18420"/>
    </cofactor>
    <cofactor evidence="1">
        <name>Mn(2+)</name>
        <dbReference type="ChEBI" id="CHEBI:29035"/>
    </cofactor>
    <text evidence="1">Binds 2 divalent metal cations per subunit. Magnesium or manganese.</text>
</comment>
<comment type="cofactor">
    <cofactor evidence="1">
        <name>Zn(2+)</name>
        <dbReference type="ChEBI" id="CHEBI:29105"/>
    </cofactor>
    <text evidence="1">Binds 1 zinc ion per subunit.</text>
</comment>
<comment type="pathway">
    <text evidence="1">Cofactor biosynthesis; riboflavin biosynthesis; 2-hydroxy-3-oxobutyl phosphate from D-ribulose 5-phosphate: step 1/1.</text>
</comment>
<comment type="pathway">
    <text evidence="1">Cofactor biosynthesis; riboflavin biosynthesis; 5-amino-6-(D-ribitylamino)uracil from GTP: step 1/4.</text>
</comment>
<comment type="similarity">
    <text evidence="1">In the N-terminal section; belongs to the DHBP synthase family.</text>
</comment>
<comment type="similarity">
    <text evidence="1">In the C-terminal section; belongs to the GTP cyclohydrolase II family.</text>
</comment>
<gene>
    <name evidence="1" type="primary">ribBA</name>
    <name type="ordered locus">SERP1326</name>
</gene>
<name>RIBBA_STAEQ</name>
<feature type="chain" id="PRO_0000151740" description="Riboflavin biosynthesis protein RibBA">
    <location>
        <begin position="1"/>
        <end position="393"/>
    </location>
</feature>
<feature type="region of interest" description="DHBP synthase">
    <location>
        <begin position="1"/>
        <end position="200"/>
    </location>
</feature>
<feature type="region of interest" description="GTP cyclohydrolase II">
    <location>
        <begin position="201"/>
        <end position="393"/>
    </location>
</feature>
<feature type="active site" description="Proton acceptor; for GTP cyclohydrolase activity" evidence="1">
    <location>
        <position position="325"/>
    </location>
</feature>
<feature type="active site" description="Nucleophile; for GTP cyclohydrolase activity" evidence="1">
    <location>
        <position position="327"/>
    </location>
</feature>
<feature type="binding site" evidence="1">
    <location>
        <begin position="27"/>
        <end position="28"/>
    </location>
    <ligand>
        <name>D-ribulose 5-phosphate</name>
        <dbReference type="ChEBI" id="CHEBI:58121"/>
    </ligand>
</feature>
<feature type="binding site" evidence="1">
    <location>
        <position position="28"/>
    </location>
    <ligand>
        <name>Mg(2+)</name>
        <dbReference type="ChEBI" id="CHEBI:18420"/>
        <label>1</label>
    </ligand>
</feature>
<feature type="binding site" evidence="1">
    <location>
        <position position="28"/>
    </location>
    <ligand>
        <name>Mg(2+)</name>
        <dbReference type="ChEBI" id="CHEBI:18420"/>
        <label>2</label>
    </ligand>
</feature>
<feature type="binding site" evidence="1">
    <location>
        <position position="32"/>
    </location>
    <ligand>
        <name>D-ribulose 5-phosphate</name>
        <dbReference type="ChEBI" id="CHEBI:58121"/>
    </ligand>
</feature>
<feature type="binding site" evidence="1">
    <location>
        <begin position="139"/>
        <end position="143"/>
    </location>
    <ligand>
        <name>D-ribulose 5-phosphate</name>
        <dbReference type="ChEBI" id="CHEBI:58121"/>
    </ligand>
</feature>
<feature type="binding site" evidence="1">
    <location>
        <position position="142"/>
    </location>
    <ligand>
        <name>Mg(2+)</name>
        <dbReference type="ChEBI" id="CHEBI:18420"/>
        <label>2</label>
    </ligand>
</feature>
<feature type="binding site" evidence="1">
    <location>
        <position position="163"/>
    </location>
    <ligand>
        <name>D-ribulose 5-phosphate</name>
        <dbReference type="ChEBI" id="CHEBI:58121"/>
    </ligand>
</feature>
<feature type="binding site" evidence="1">
    <location>
        <begin position="249"/>
        <end position="253"/>
    </location>
    <ligand>
        <name>GTP</name>
        <dbReference type="ChEBI" id="CHEBI:37565"/>
    </ligand>
</feature>
<feature type="binding site" evidence="1">
    <location>
        <position position="254"/>
    </location>
    <ligand>
        <name>Zn(2+)</name>
        <dbReference type="ChEBI" id="CHEBI:29105"/>
        <note>catalytic</note>
    </ligand>
</feature>
<feature type="binding site" evidence="1">
    <location>
        <position position="265"/>
    </location>
    <ligand>
        <name>Zn(2+)</name>
        <dbReference type="ChEBI" id="CHEBI:29105"/>
        <note>catalytic</note>
    </ligand>
</feature>
<feature type="binding site" evidence="1">
    <location>
        <position position="267"/>
    </location>
    <ligand>
        <name>Zn(2+)</name>
        <dbReference type="ChEBI" id="CHEBI:29105"/>
        <note>catalytic</note>
    </ligand>
</feature>
<feature type="binding site" evidence="1">
    <location>
        <position position="270"/>
    </location>
    <ligand>
        <name>GTP</name>
        <dbReference type="ChEBI" id="CHEBI:37565"/>
    </ligand>
</feature>
<feature type="binding site" evidence="1">
    <location>
        <begin position="291"/>
        <end position="293"/>
    </location>
    <ligand>
        <name>GTP</name>
        <dbReference type="ChEBI" id="CHEBI:37565"/>
    </ligand>
</feature>
<feature type="binding site" evidence="1">
    <location>
        <position position="313"/>
    </location>
    <ligand>
        <name>GTP</name>
        <dbReference type="ChEBI" id="CHEBI:37565"/>
    </ligand>
</feature>
<feature type="binding site" evidence="1">
    <location>
        <position position="348"/>
    </location>
    <ligand>
        <name>GTP</name>
        <dbReference type="ChEBI" id="CHEBI:37565"/>
    </ligand>
</feature>
<feature type="binding site" evidence="1">
    <location>
        <position position="353"/>
    </location>
    <ligand>
        <name>GTP</name>
        <dbReference type="ChEBI" id="CHEBI:37565"/>
    </ligand>
</feature>
<feature type="site" description="Essential for DHBP synthase activity" evidence="1">
    <location>
        <position position="125"/>
    </location>
</feature>
<feature type="site" description="Essential for DHBP synthase activity" evidence="1">
    <location>
        <position position="163"/>
    </location>
</feature>
<evidence type="ECO:0000255" key="1">
    <source>
        <dbReference type="HAMAP-Rule" id="MF_01283"/>
    </source>
</evidence>
<organism>
    <name type="scientific">Staphylococcus epidermidis (strain ATCC 35984 / DSM 28319 / BCRC 17069 / CCUG 31568 / BM 3577 / RP62A)</name>
    <dbReference type="NCBI Taxonomy" id="176279"/>
    <lineage>
        <taxon>Bacteria</taxon>
        <taxon>Bacillati</taxon>
        <taxon>Bacillota</taxon>
        <taxon>Bacilli</taxon>
        <taxon>Bacillales</taxon>
        <taxon>Staphylococcaceae</taxon>
        <taxon>Staphylococcus</taxon>
    </lineage>
</organism>
<accession>Q5HNE3</accession>
<sequence length="393" mass="44290">MQFDTIELAIEALRNGESIIVVDDEDRENEGDLVAVTEWMDDNTINFMAREGRGLICAPIDKSIAERLKLQSMEQNNTDIYGTHFTVSIDHYKTTTGISAHERTQTARALIDENTNPEDFHRPGHLFPLIAKENGVLTRNGHTEAAVDLARLTGAQPAGVICEIMNDDGTMAKGEDLQSFKERHHLKMITIKSLVAFRKAVELNVNLKAKVKMPTDFGHFDMYGFTTNYSDEEIVAIVKGDLKSNPNVRMHSACLTGDIFHSQRCDCGAQLEASMKYIDEHGGMIIYLPQEGRGIGLINKLRAYELIEKGYDTVTANLALGFDEDLRDYHVAAEILKYFDISEINLLSNNPKKFEGLEDYGIEIVDRIELIVPETQYNHSYMETKKNKMGHLI</sequence>
<reference key="1">
    <citation type="journal article" date="2005" name="J. Bacteriol.">
        <title>Insights on evolution of virulence and resistance from the complete genome analysis of an early methicillin-resistant Staphylococcus aureus strain and a biofilm-producing methicillin-resistant Staphylococcus epidermidis strain.</title>
        <authorList>
            <person name="Gill S.R."/>
            <person name="Fouts D.E."/>
            <person name="Archer G.L."/>
            <person name="Mongodin E.F."/>
            <person name="DeBoy R.T."/>
            <person name="Ravel J."/>
            <person name="Paulsen I.T."/>
            <person name="Kolonay J.F."/>
            <person name="Brinkac L.M."/>
            <person name="Beanan M.J."/>
            <person name="Dodson R.J."/>
            <person name="Daugherty S.C."/>
            <person name="Madupu R."/>
            <person name="Angiuoli S.V."/>
            <person name="Durkin A.S."/>
            <person name="Haft D.H."/>
            <person name="Vamathevan J.J."/>
            <person name="Khouri H."/>
            <person name="Utterback T.R."/>
            <person name="Lee C."/>
            <person name="Dimitrov G."/>
            <person name="Jiang L."/>
            <person name="Qin H."/>
            <person name="Weidman J."/>
            <person name="Tran K."/>
            <person name="Kang K.H."/>
            <person name="Hance I.R."/>
            <person name="Nelson K.E."/>
            <person name="Fraser C.M."/>
        </authorList>
    </citation>
    <scope>NUCLEOTIDE SEQUENCE [LARGE SCALE GENOMIC DNA]</scope>
    <source>
        <strain>ATCC 35984 / DSM 28319 / BCRC 17069 / CCUG 31568 / BM 3577 / RP62A</strain>
    </source>
</reference>
<protein>
    <recommendedName>
        <fullName evidence="1">Riboflavin biosynthesis protein RibBA</fullName>
    </recommendedName>
    <domain>
        <recommendedName>
            <fullName evidence="1">3,4-dihydroxy-2-butanone 4-phosphate synthase</fullName>
            <shortName evidence="1">DHBP synthase</shortName>
            <ecNumber evidence="1">4.1.99.12</ecNumber>
        </recommendedName>
    </domain>
    <domain>
        <recommendedName>
            <fullName evidence="1">GTP cyclohydrolase-2</fullName>
            <ecNumber evidence="1">3.5.4.25</ecNumber>
        </recommendedName>
        <alternativeName>
            <fullName evidence="1">GTP cyclohydrolase II</fullName>
        </alternativeName>
    </domain>
</protein>
<proteinExistence type="inferred from homology"/>
<keyword id="KW-0342">GTP-binding</keyword>
<keyword id="KW-0378">Hydrolase</keyword>
<keyword id="KW-0456">Lyase</keyword>
<keyword id="KW-0460">Magnesium</keyword>
<keyword id="KW-0464">Manganese</keyword>
<keyword id="KW-0479">Metal-binding</keyword>
<keyword id="KW-0511">Multifunctional enzyme</keyword>
<keyword id="KW-0547">Nucleotide-binding</keyword>
<keyword id="KW-1185">Reference proteome</keyword>
<keyword id="KW-0686">Riboflavin biosynthesis</keyword>
<keyword id="KW-0862">Zinc</keyword>